<proteinExistence type="inferred from homology"/>
<evidence type="ECO:0000305" key="1"/>
<name>YCP1_STRLI</name>
<comment type="similarity">
    <text evidence="1">Belongs to the peptidase C56 family.</text>
</comment>
<reference key="1">
    <citation type="journal article" date="1994" name="J. Bacteriol.">
        <title>Chloroperoxidase from Streptomyces lividans: isolation and characterization of the enzyme and the corresponding gene.</title>
        <authorList>
            <person name="Bantleon R."/>
            <person name="Altenbuchner J."/>
            <person name="van Pee K.-H."/>
        </authorList>
    </citation>
    <scope>NUCLEOTIDE SEQUENCE [GENOMIC DNA]</scope>
    <source>
        <strain>TK64</strain>
    </source>
</reference>
<dbReference type="EMBL" id="U02635">
    <property type="status" value="NOT_ANNOTATED_CDS"/>
    <property type="molecule type" value="Unassigned_DNA"/>
</dbReference>
<dbReference type="PIR" id="B55211">
    <property type="entry name" value="B55211"/>
</dbReference>
<dbReference type="SMR" id="P49322"/>
<dbReference type="GO" id="GO:0006355">
    <property type="term" value="P:regulation of DNA-templated transcription"/>
    <property type="evidence" value="ECO:0007669"/>
    <property type="project" value="TreeGrafter"/>
</dbReference>
<dbReference type="Gene3D" id="3.40.50.880">
    <property type="match status" value="1"/>
</dbReference>
<dbReference type="InterPro" id="IPR029062">
    <property type="entry name" value="Class_I_gatase-like"/>
</dbReference>
<dbReference type="InterPro" id="IPR002818">
    <property type="entry name" value="DJ-1/PfpI"/>
</dbReference>
<dbReference type="InterPro" id="IPR052158">
    <property type="entry name" value="INH-QAR"/>
</dbReference>
<dbReference type="PANTHER" id="PTHR43130">
    <property type="entry name" value="ARAC-FAMILY TRANSCRIPTIONAL REGULATOR"/>
    <property type="match status" value="1"/>
</dbReference>
<dbReference type="PANTHER" id="PTHR43130:SF3">
    <property type="entry name" value="HTH-TYPE TRANSCRIPTIONAL REGULATOR RV1931C"/>
    <property type="match status" value="1"/>
</dbReference>
<dbReference type="Pfam" id="PF01965">
    <property type="entry name" value="DJ-1_PfpI"/>
    <property type="match status" value="1"/>
</dbReference>
<dbReference type="SUPFAM" id="SSF52317">
    <property type="entry name" value="Class I glutamine amidotransferase-like"/>
    <property type="match status" value="1"/>
</dbReference>
<organism>
    <name type="scientific">Streptomyces lividans</name>
    <dbReference type="NCBI Taxonomy" id="1916"/>
    <lineage>
        <taxon>Bacteria</taxon>
        <taxon>Bacillati</taxon>
        <taxon>Actinomycetota</taxon>
        <taxon>Actinomycetes</taxon>
        <taxon>Kitasatosporales</taxon>
        <taxon>Streptomycetaceae</taxon>
        <taxon>Streptomyces</taxon>
    </lineage>
</organism>
<sequence>MTAGPHRVVVLVFDGMKLLDLSGPAEVFSEANRFGADYRLSIVSADGSPVRSSIGMLVPADTDARAAAAHDTLVVVGGDALPGSPVGPVLGAAAKELAERAGRVASVCTGAFVLGAAGLLEGRRATTHWQHTATLARRCPS</sequence>
<feature type="chain" id="PRO_0000157848" description="Uncharacterized protein in cpoL 5'region">
    <location>
        <begin position="1"/>
        <end position="141" status="greater than"/>
    </location>
</feature>
<feature type="non-terminal residue">
    <location>
        <position position="141"/>
    </location>
</feature>
<protein>
    <recommendedName>
        <fullName>Uncharacterized protein in cpoL 5'region</fullName>
    </recommendedName>
    <alternativeName>
        <fullName>ORF1</fullName>
    </alternativeName>
</protein>
<accession>P49322</accession>